<dbReference type="EC" id="2.7.7.6" evidence="1"/>
<dbReference type="EMBL" id="AB002583">
    <property type="protein sequence ID" value="BAC76252.1"/>
    <property type="molecule type" value="Genomic_DNA"/>
</dbReference>
<dbReference type="RefSeq" id="NP_849090.1">
    <property type="nucleotide sequence ID" value="NC_004799.1"/>
</dbReference>
<dbReference type="SMR" id="Q85FU3"/>
<dbReference type="STRING" id="280699.Q85FU3"/>
<dbReference type="EnsemblPlants" id="CMV185CT">
    <property type="protein sequence ID" value="CMV185CT"/>
    <property type="gene ID" value="CMV185C"/>
</dbReference>
<dbReference type="GeneID" id="844994"/>
<dbReference type="Gramene" id="CMV185CT">
    <property type="protein sequence ID" value="CMV185CT"/>
    <property type="gene ID" value="CMV185C"/>
</dbReference>
<dbReference type="KEGG" id="cme:CymeCp158"/>
<dbReference type="eggNOG" id="ENOG502RZXA">
    <property type="taxonomic scope" value="Eukaryota"/>
</dbReference>
<dbReference type="HOGENOM" id="CLU_053084_0_1_1"/>
<dbReference type="Proteomes" id="UP000007014">
    <property type="component" value="Chloroplast"/>
</dbReference>
<dbReference type="GO" id="GO:0009507">
    <property type="term" value="C:chloroplast"/>
    <property type="evidence" value="ECO:0007669"/>
    <property type="project" value="UniProtKB-SubCell"/>
</dbReference>
<dbReference type="GO" id="GO:0000428">
    <property type="term" value="C:DNA-directed RNA polymerase complex"/>
    <property type="evidence" value="ECO:0007669"/>
    <property type="project" value="UniProtKB-KW"/>
</dbReference>
<dbReference type="GO" id="GO:0005739">
    <property type="term" value="C:mitochondrion"/>
    <property type="evidence" value="ECO:0007669"/>
    <property type="project" value="GOC"/>
</dbReference>
<dbReference type="GO" id="GO:0003677">
    <property type="term" value="F:DNA binding"/>
    <property type="evidence" value="ECO:0007669"/>
    <property type="project" value="UniProtKB-UniRule"/>
</dbReference>
<dbReference type="GO" id="GO:0003899">
    <property type="term" value="F:DNA-directed RNA polymerase activity"/>
    <property type="evidence" value="ECO:0007669"/>
    <property type="project" value="UniProtKB-UniRule"/>
</dbReference>
<dbReference type="GO" id="GO:0046983">
    <property type="term" value="F:protein dimerization activity"/>
    <property type="evidence" value="ECO:0007669"/>
    <property type="project" value="InterPro"/>
</dbReference>
<dbReference type="GO" id="GO:0006351">
    <property type="term" value="P:DNA-templated transcription"/>
    <property type="evidence" value="ECO:0007669"/>
    <property type="project" value="UniProtKB-UniRule"/>
</dbReference>
<dbReference type="CDD" id="cd06928">
    <property type="entry name" value="RNAP_alpha_NTD"/>
    <property type="match status" value="1"/>
</dbReference>
<dbReference type="Gene3D" id="1.10.150.20">
    <property type="entry name" value="5' to 3' exonuclease, C-terminal subdomain"/>
    <property type="match status" value="1"/>
</dbReference>
<dbReference type="Gene3D" id="2.170.120.12">
    <property type="entry name" value="DNA-directed RNA polymerase, insert domain"/>
    <property type="match status" value="1"/>
</dbReference>
<dbReference type="Gene3D" id="3.30.1360.10">
    <property type="entry name" value="RNA polymerase, RBP11-like subunit"/>
    <property type="match status" value="1"/>
</dbReference>
<dbReference type="HAMAP" id="MF_00059">
    <property type="entry name" value="RNApol_bact_RpoA"/>
    <property type="match status" value="1"/>
</dbReference>
<dbReference type="InterPro" id="IPR011262">
    <property type="entry name" value="DNA-dir_RNA_pol_insert"/>
</dbReference>
<dbReference type="InterPro" id="IPR011263">
    <property type="entry name" value="DNA-dir_RNA_pol_RpoA/D/Rpb3"/>
</dbReference>
<dbReference type="InterPro" id="IPR011773">
    <property type="entry name" value="DNA-dir_RpoA"/>
</dbReference>
<dbReference type="InterPro" id="IPR036603">
    <property type="entry name" value="RBP11-like"/>
</dbReference>
<dbReference type="InterPro" id="IPR011260">
    <property type="entry name" value="RNAP_asu_C"/>
</dbReference>
<dbReference type="InterPro" id="IPR036643">
    <property type="entry name" value="RNApol_insert_sf"/>
</dbReference>
<dbReference type="NCBIfam" id="NF003519">
    <property type="entry name" value="PRK05182.2-5"/>
    <property type="match status" value="1"/>
</dbReference>
<dbReference type="NCBIfam" id="TIGR02027">
    <property type="entry name" value="rpoA"/>
    <property type="match status" value="1"/>
</dbReference>
<dbReference type="Pfam" id="PF01000">
    <property type="entry name" value="RNA_pol_A_bac"/>
    <property type="match status" value="1"/>
</dbReference>
<dbReference type="Pfam" id="PF03118">
    <property type="entry name" value="RNA_pol_A_CTD"/>
    <property type="match status" value="1"/>
</dbReference>
<dbReference type="Pfam" id="PF01193">
    <property type="entry name" value="RNA_pol_L"/>
    <property type="match status" value="1"/>
</dbReference>
<dbReference type="SMART" id="SM00662">
    <property type="entry name" value="RPOLD"/>
    <property type="match status" value="1"/>
</dbReference>
<dbReference type="SUPFAM" id="SSF47789">
    <property type="entry name" value="C-terminal domain of RNA polymerase alpha subunit"/>
    <property type="match status" value="1"/>
</dbReference>
<dbReference type="SUPFAM" id="SSF56553">
    <property type="entry name" value="Insert subdomain of RNA polymerase alpha subunit"/>
    <property type="match status" value="1"/>
</dbReference>
<dbReference type="SUPFAM" id="SSF55257">
    <property type="entry name" value="RBP11-like subunits of RNA polymerase"/>
    <property type="match status" value="1"/>
</dbReference>
<reference key="1">
    <citation type="journal article" date="2003" name="DNA Res.">
        <title>Complete sequence and analysis of the plastid genome of the unicellular red alga Cyanidioschyzon merolae.</title>
        <authorList>
            <person name="Ohta N."/>
            <person name="Matsuzaki M."/>
            <person name="Misumi O."/>
            <person name="Miyagishima S.-Y."/>
            <person name="Nozaki H."/>
            <person name="Tanaka K."/>
            <person name="Shin-i T."/>
            <person name="Kohara Y."/>
            <person name="Kuroiwa T."/>
        </authorList>
    </citation>
    <scope>NUCLEOTIDE SEQUENCE [LARGE SCALE GENOMIC DNA]</scope>
    <source>
        <strain>NIES-3377 / 10D</strain>
    </source>
</reference>
<evidence type="ECO:0000255" key="1">
    <source>
        <dbReference type="HAMAP-Rule" id="MF_00059"/>
    </source>
</evidence>
<keyword id="KW-0150">Chloroplast</keyword>
<keyword id="KW-0240">DNA-directed RNA polymerase</keyword>
<keyword id="KW-0548">Nucleotidyltransferase</keyword>
<keyword id="KW-0934">Plastid</keyword>
<keyword id="KW-1185">Reference proteome</keyword>
<keyword id="KW-0804">Transcription</keyword>
<keyword id="KW-0808">Transferase</keyword>
<name>RPOA_CYAM1</name>
<protein>
    <recommendedName>
        <fullName evidence="1">DNA-directed RNA polymerase subunit alpha</fullName>
        <shortName evidence="1">PEP</shortName>
        <ecNumber evidence="1">2.7.7.6</ecNumber>
    </recommendedName>
    <alternativeName>
        <fullName evidence="1">Plastid-encoded RNA polymerase subunit alpha</fullName>
        <shortName evidence="1">RNA polymerase subunit alpha</shortName>
    </alternativeName>
</protein>
<feature type="chain" id="PRO_0000175451" description="DNA-directed RNA polymerase subunit alpha">
    <location>
        <begin position="1"/>
        <end position="316"/>
    </location>
</feature>
<feature type="region of interest" description="Alpha N-terminal domain (alpha-NTD)" evidence="1">
    <location>
        <begin position="1"/>
        <end position="233"/>
    </location>
</feature>
<feature type="region of interest" description="Alpha C-terminal domain (alpha-CTD)" evidence="1">
    <location>
        <begin position="245"/>
        <end position="316"/>
    </location>
</feature>
<proteinExistence type="inferred from homology"/>
<accession>Q85FU3</accession>
<gene>
    <name evidence="1" type="primary">rpoA</name>
</gene>
<sequence length="316" mass="35870">MCMSQFPIEFQIECAASTINHARDIYAKFILQPLSYTQALTMGNSLRRVLLSELESISITAVRIAGASHELATLKGVREDVLQIMLNLKQIVWRGQLKKQPTITRLKVQGPAIVTAAAFQSEANSSANIIDTCQYIATIDTQDILEMECQLEQSSGYRLAKPSEMIDWLPIDGVFMPVKRVNFWVDKALVDKVLVDKALHLEIWTNGSISPQEALHQAARILTHWFNPLQTLEWKTSHTKNEQTMAQLSNMLIEELDLSVRAYNCLKRAQIHSVADLMQYTQEELLALKNFGQKSVEEVNKALEQKLHCQLKKYVD</sequence>
<geneLocation type="chloroplast"/>
<comment type="function">
    <text evidence="1">DNA-dependent RNA polymerase catalyzes the transcription of DNA into RNA using the four ribonucleoside triphosphates as substrates.</text>
</comment>
<comment type="catalytic activity">
    <reaction evidence="1">
        <text>RNA(n) + a ribonucleoside 5'-triphosphate = RNA(n+1) + diphosphate</text>
        <dbReference type="Rhea" id="RHEA:21248"/>
        <dbReference type="Rhea" id="RHEA-COMP:14527"/>
        <dbReference type="Rhea" id="RHEA-COMP:17342"/>
        <dbReference type="ChEBI" id="CHEBI:33019"/>
        <dbReference type="ChEBI" id="CHEBI:61557"/>
        <dbReference type="ChEBI" id="CHEBI:140395"/>
        <dbReference type="EC" id="2.7.7.6"/>
    </reaction>
</comment>
<comment type="subunit">
    <text evidence="1">In plastids the minimal PEP RNA polymerase catalytic core is composed of four subunits: alpha, beta, beta', and beta''. When a (nuclear-encoded) sigma factor is associated with the core the holoenzyme is formed, which can initiate transcription.</text>
</comment>
<comment type="subcellular location">
    <subcellularLocation>
        <location>Plastid</location>
        <location>Chloroplast</location>
    </subcellularLocation>
</comment>
<comment type="domain">
    <text evidence="1">The N-terminal domain is essential for RNAP assembly and basal transcription, whereas the C-terminal domain is involved in interaction with transcriptional regulators and with upstream promoter elements.</text>
</comment>
<comment type="similarity">
    <text evidence="1">Belongs to the RNA polymerase alpha chain family.</text>
</comment>
<organism>
    <name type="scientific">Cyanidioschyzon merolae (strain NIES-3377 / 10D)</name>
    <name type="common">Unicellular red alga</name>
    <dbReference type="NCBI Taxonomy" id="280699"/>
    <lineage>
        <taxon>Eukaryota</taxon>
        <taxon>Rhodophyta</taxon>
        <taxon>Bangiophyceae</taxon>
        <taxon>Cyanidiales</taxon>
        <taxon>Cyanidiaceae</taxon>
        <taxon>Cyanidioschyzon</taxon>
    </lineage>
</organism>